<feature type="chain" id="PRO_0000091299" description="Elongation factor Tu">
    <location>
        <begin position="1" status="less than"/>
        <end position="365" status="greater than"/>
    </location>
</feature>
<feature type="domain" description="tr-type G">
    <location>
        <begin position="1" status="less than"/>
        <end position="185"/>
    </location>
</feature>
<feature type="binding site" evidence="1">
    <location>
        <begin position="1" status="less than"/>
        <end position="7"/>
    </location>
    <ligand>
        <name>GTP</name>
        <dbReference type="ChEBI" id="CHEBI:37565"/>
    </ligand>
</feature>
<feature type="binding site" evidence="1">
    <location>
        <position position="7"/>
    </location>
    <ligand>
        <name>Mg(2+)</name>
        <dbReference type="ChEBI" id="CHEBI:18420"/>
    </ligand>
</feature>
<feature type="binding site" evidence="1">
    <location>
        <begin position="62"/>
        <end position="66"/>
    </location>
    <ligand>
        <name>GTP</name>
        <dbReference type="ChEBI" id="CHEBI:37565"/>
    </ligand>
</feature>
<feature type="binding site" evidence="1">
    <location>
        <begin position="117"/>
        <end position="120"/>
    </location>
    <ligand>
        <name>GTP</name>
        <dbReference type="ChEBI" id="CHEBI:37565"/>
    </ligand>
</feature>
<feature type="non-terminal residue">
    <location>
        <position position="1"/>
    </location>
</feature>
<feature type="non-terminal residue">
    <location>
        <position position="365"/>
    </location>
</feature>
<accession>O31301</accession>
<evidence type="ECO:0000255" key="1">
    <source>
        <dbReference type="HAMAP-Rule" id="MF_00118"/>
    </source>
</evidence>
<sequence>HVDHGKTTLTAAITTVLAKKYGGSARAFDQIDNAPEEKARGITINTSHVEYDTSMRHYAHVDCPGHADYIKNMITGAAQMDGAILVVAATDGPMPQTREHILLGRQVGVPYIVVFLNKCDMVDDEELLELVEMEVRDLLTQYDFPGEKTPIIRGSALKALEGDAVWEEKIVDLANTLDSYIPTPERSIDQPFLLPIEDVFSISGRGTVVTGRVERGVIKVGEEVEIVGIKVTSKTICTGVEMFRKLLDEGRAGENVGVLLRGTKRDDIERGQVLAKPGTITPHIKFESEVYVLSKEEGGRHTPFFKGYRPQFYFRTTDVTGYVELPEGVEMVMPGDNIKMVVTLIHPIAMSDGLRFAIREGGRTV</sequence>
<gene>
    <name evidence="1" type="primary">tuf</name>
</gene>
<dbReference type="EC" id="3.6.5.3" evidence="1"/>
<dbReference type="EMBL" id="Y12311">
    <property type="protein sequence ID" value="CAA72978.1"/>
    <property type="molecule type" value="Genomic_DNA"/>
</dbReference>
<dbReference type="SMR" id="O31301"/>
<dbReference type="STRING" id="118110.XW81_02415"/>
<dbReference type="GO" id="GO:0005829">
    <property type="term" value="C:cytosol"/>
    <property type="evidence" value="ECO:0007669"/>
    <property type="project" value="TreeGrafter"/>
</dbReference>
<dbReference type="GO" id="GO:0005525">
    <property type="term" value="F:GTP binding"/>
    <property type="evidence" value="ECO:0007669"/>
    <property type="project" value="UniProtKB-KW"/>
</dbReference>
<dbReference type="GO" id="GO:0003924">
    <property type="term" value="F:GTPase activity"/>
    <property type="evidence" value="ECO:0007669"/>
    <property type="project" value="InterPro"/>
</dbReference>
<dbReference type="GO" id="GO:0003746">
    <property type="term" value="F:translation elongation factor activity"/>
    <property type="evidence" value="ECO:0007669"/>
    <property type="project" value="UniProtKB-KW"/>
</dbReference>
<dbReference type="CDD" id="cd01884">
    <property type="entry name" value="EF_Tu"/>
    <property type="match status" value="1"/>
</dbReference>
<dbReference type="CDD" id="cd03697">
    <property type="entry name" value="EFTU_II"/>
    <property type="match status" value="1"/>
</dbReference>
<dbReference type="CDD" id="cd03707">
    <property type="entry name" value="EFTU_III"/>
    <property type="match status" value="1"/>
</dbReference>
<dbReference type="FunFam" id="2.40.30.10:FF:000001">
    <property type="entry name" value="Elongation factor Tu"/>
    <property type="match status" value="1"/>
</dbReference>
<dbReference type="FunFam" id="3.40.50.300:FF:000003">
    <property type="entry name" value="Elongation factor Tu"/>
    <property type="match status" value="1"/>
</dbReference>
<dbReference type="Gene3D" id="3.40.50.300">
    <property type="entry name" value="P-loop containing nucleotide triphosphate hydrolases"/>
    <property type="match status" value="1"/>
</dbReference>
<dbReference type="Gene3D" id="2.40.30.10">
    <property type="entry name" value="Translation factors"/>
    <property type="match status" value="2"/>
</dbReference>
<dbReference type="HAMAP" id="MF_00118_B">
    <property type="entry name" value="EF_Tu_B"/>
    <property type="match status" value="1"/>
</dbReference>
<dbReference type="InterPro" id="IPR041709">
    <property type="entry name" value="EF-Tu_GTP-bd"/>
</dbReference>
<dbReference type="InterPro" id="IPR050055">
    <property type="entry name" value="EF-Tu_GTPase"/>
</dbReference>
<dbReference type="InterPro" id="IPR004161">
    <property type="entry name" value="EFTu-like_2"/>
</dbReference>
<dbReference type="InterPro" id="IPR033720">
    <property type="entry name" value="EFTU_2"/>
</dbReference>
<dbReference type="InterPro" id="IPR031157">
    <property type="entry name" value="G_TR_CS"/>
</dbReference>
<dbReference type="InterPro" id="IPR027417">
    <property type="entry name" value="P-loop_NTPase"/>
</dbReference>
<dbReference type="InterPro" id="IPR000795">
    <property type="entry name" value="T_Tr_GTP-bd_dom"/>
</dbReference>
<dbReference type="InterPro" id="IPR009000">
    <property type="entry name" value="Transl_B-barrel_sf"/>
</dbReference>
<dbReference type="InterPro" id="IPR009001">
    <property type="entry name" value="Transl_elong_EF1A/Init_IF2_C"/>
</dbReference>
<dbReference type="InterPro" id="IPR004541">
    <property type="entry name" value="Transl_elong_EFTu/EF1A_bac/org"/>
</dbReference>
<dbReference type="InterPro" id="IPR004160">
    <property type="entry name" value="Transl_elong_EFTu/EF1A_C"/>
</dbReference>
<dbReference type="NCBIfam" id="TIGR00485">
    <property type="entry name" value="EF-Tu"/>
    <property type="match status" value="1"/>
</dbReference>
<dbReference type="NCBIfam" id="NF000766">
    <property type="entry name" value="PRK00049.1"/>
    <property type="match status" value="1"/>
</dbReference>
<dbReference type="NCBIfam" id="NF009372">
    <property type="entry name" value="PRK12735.1"/>
    <property type="match status" value="1"/>
</dbReference>
<dbReference type="NCBIfam" id="NF009373">
    <property type="entry name" value="PRK12736.1"/>
    <property type="match status" value="1"/>
</dbReference>
<dbReference type="PANTHER" id="PTHR43721:SF22">
    <property type="entry name" value="ELONGATION FACTOR TU, MITOCHONDRIAL"/>
    <property type="match status" value="1"/>
</dbReference>
<dbReference type="PANTHER" id="PTHR43721">
    <property type="entry name" value="ELONGATION FACTOR TU-RELATED"/>
    <property type="match status" value="1"/>
</dbReference>
<dbReference type="Pfam" id="PF00009">
    <property type="entry name" value="GTP_EFTU"/>
    <property type="match status" value="1"/>
</dbReference>
<dbReference type="Pfam" id="PF03144">
    <property type="entry name" value="GTP_EFTU_D2"/>
    <property type="match status" value="1"/>
</dbReference>
<dbReference type="Pfam" id="PF03143">
    <property type="entry name" value="GTP_EFTU_D3"/>
    <property type="match status" value="1"/>
</dbReference>
<dbReference type="PRINTS" id="PR00315">
    <property type="entry name" value="ELONGATNFCT"/>
</dbReference>
<dbReference type="SUPFAM" id="SSF50465">
    <property type="entry name" value="EF-Tu/eEF-1alpha/eIF2-gamma C-terminal domain"/>
    <property type="match status" value="1"/>
</dbReference>
<dbReference type="SUPFAM" id="SSF52540">
    <property type="entry name" value="P-loop containing nucleoside triphosphate hydrolases"/>
    <property type="match status" value="1"/>
</dbReference>
<dbReference type="SUPFAM" id="SSF50447">
    <property type="entry name" value="Translation proteins"/>
    <property type="match status" value="1"/>
</dbReference>
<dbReference type="PROSITE" id="PS00301">
    <property type="entry name" value="G_TR_1"/>
    <property type="match status" value="1"/>
</dbReference>
<dbReference type="PROSITE" id="PS51722">
    <property type="entry name" value="G_TR_2"/>
    <property type="match status" value="1"/>
</dbReference>
<keyword id="KW-0963">Cytoplasm</keyword>
<keyword id="KW-0251">Elongation factor</keyword>
<keyword id="KW-0342">GTP-binding</keyword>
<keyword id="KW-0378">Hydrolase</keyword>
<keyword id="KW-0460">Magnesium</keyword>
<keyword id="KW-0479">Metal-binding</keyword>
<keyword id="KW-0547">Nucleotide-binding</keyword>
<keyword id="KW-0648">Protein biosynthesis</keyword>
<protein>
    <recommendedName>
        <fullName evidence="1">Elongation factor Tu</fullName>
        <shortName evidence="1">EF-Tu</shortName>
        <ecNumber evidence="1">3.6.5.3</ecNumber>
    </recommendedName>
</protein>
<organism>
    <name type="scientific">Buchnera aphidicola subsp. Schlechtendalia chinensis</name>
    <dbReference type="NCBI Taxonomy" id="118110"/>
    <lineage>
        <taxon>Bacteria</taxon>
        <taxon>Pseudomonadati</taxon>
        <taxon>Pseudomonadota</taxon>
        <taxon>Gammaproteobacteria</taxon>
        <taxon>Enterobacterales</taxon>
        <taxon>Erwiniaceae</taxon>
        <taxon>Buchnera</taxon>
    </lineage>
</organism>
<name>EFTU_BUCSC</name>
<proteinExistence type="inferred from homology"/>
<reference key="1">
    <citation type="journal article" date="1998" name="Mol. Biol. Evol.">
        <title>Evolutionary rates for tuf genes in endosymbionts of aphids.</title>
        <authorList>
            <person name="Brynnel E.U."/>
            <person name="Kurland C.G."/>
            <person name="Moran N.A."/>
            <person name="Andersson S.G."/>
        </authorList>
    </citation>
    <scope>NUCLEOTIDE SEQUENCE [GENOMIC DNA]</scope>
</reference>
<comment type="function">
    <text evidence="1">GTP hydrolase that promotes the GTP-dependent binding of aminoacyl-tRNA to the A-site of ribosomes during protein biosynthesis.</text>
</comment>
<comment type="catalytic activity">
    <reaction evidence="1">
        <text>GTP + H2O = GDP + phosphate + H(+)</text>
        <dbReference type="Rhea" id="RHEA:19669"/>
        <dbReference type="ChEBI" id="CHEBI:15377"/>
        <dbReference type="ChEBI" id="CHEBI:15378"/>
        <dbReference type="ChEBI" id="CHEBI:37565"/>
        <dbReference type="ChEBI" id="CHEBI:43474"/>
        <dbReference type="ChEBI" id="CHEBI:58189"/>
        <dbReference type="EC" id="3.6.5.3"/>
    </reaction>
    <physiologicalReaction direction="left-to-right" evidence="1">
        <dbReference type="Rhea" id="RHEA:19670"/>
    </physiologicalReaction>
</comment>
<comment type="subunit">
    <text evidence="1">Monomer.</text>
</comment>
<comment type="subcellular location">
    <subcellularLocation>
        <location evidence="1">Cytoplasm</location>
    </subcellularLocation>
</comment>
<comment type="similarity">
    <text evidence="1">Belongs to the TRAFAC class translation factor GTPase superfamily. Classic translation factor GTPase family. EF-Tu/EF-1A subfamily.</text>
</comment>